<keyword id="KW-1003">Cell membrane</keyword>
<keyword id="KW-0210">Decarboxylase</keyword>
<keyword id="KW-0444">Lipid biosynthesis</keyword>
<keyword id="KW-0443">Lipid metabolism</keyword>
<keyword id="KW-0456">Lyase</keyword>
<keyword id="KW-0472">Membrane</keyword>
<keyword id="KW-0594">Phospholipid biosynthesis</keyword>
<keyword id="KW-1208">Phospholipid metabolism</keyword>
<keyword id="KW-0670">Pyruvate</keyword>
<keyword id="KW-1185">Reference proteome</keyword>
<keyword id="KW-0865">Zymogen</keyword>
<evidence type="ECO:0000255" key="1">
    <source>
        <dbReference type="HAMAP-Rule" id="MF_00664"/>
    </source>
</evidence>
<proteinExistence type="inferred from homology"/>
<gene>
    <name evidence="1" type="primary">psd</name>
    <name type="ordered locus">SAR11_0645</name>
</gene>
<reference key="1">
    <citation type="journal article" date="2005" name="Science">
        <title>Genome streamlining in a cosmopolitan oceanic bacterium.</title>
        <authorList>
            <person name="Giovannoni S.J."/>
            <person name="Tripp H.J."/>
            <person name="Givan S."/>
            <person name="Podar M."/>
            <person name="Vergin K.L."/>
            <person name="Baptista D."/>
            <person name="Bibbs L."/>
            <person name="Eads J."/>
            <person name="Richardson T.H."/>
            <person name="Noordewier M."/>
            <person name="Rappe M.S."/>
            <person name="Short J.M."/>
            <person name="Carrington J.C."/>
            <person name="Mathur E.J."/>
        </authorList>
    </citation>
    <scope>NUCLEOTIDE SEQUENCE [LARGE SCALE GENOMIC DNA]</scope>
    <source>
        <strain>HTCC1062</strain>
    </source>
</reference>
<sequence>MLEKIFPKIHSEGYKFLAIAIIVTIFLYVLSTFLGLIGLVLSIWVYYFFRDPERISINDENYLTSPADGEVLMVHEVDGPKELGLEDRKFTKISIFMNVFDCHVNRTPCEGKISEILYKPGKFLNASLDKASEDNERNYYKITNTHGEEIIVVQIAGLIARRIVCESSKDQQLQQGERIGMIRFGSRADVYFENYESLVKVGQKTIAGETLLAKK</sequence>
<name>PSD_PELUB</name>
<feature type="chain" id="PRO_0000262239" description="Phosphatidylserine decarboxylase beta chain" evidence="1">
    <location>
        <begin position="1"/>
        <end position="185"/>
    </location>
</feature>
<feature type="chain" id="PRO_0000262240" description="Phosphatidylserine decarboxylase alpha chain" evidence="1">
    <location>
        <begin position="186"/>
        <end position="215"/>
    </location>
</feature>
<feature type="active site" description="Schiff-base intermediate with substrate; via pyruvic acid" evidence="1">
    <location>
        <position position="186"/>
    </location>
</feature>
<feature type="site" description="Cleavage (non-hydrolytic); by autocatalysis" evidence="1">
    <location>
        <begin position="185"/>
        <end position="186"/>
    </location>
</feature>
<feature type="modified residue" description="Pyruvic acid (Ser); by autocatalysis" evidence="1">
    <location>
        <position position="186"/>
    </location>
</feature>
<accession>Q4FMX4</accession>
<dbReference type="EC" id="4.1.1.65" evidence="1"/>
<dbReference type="EMBL" id="CP000084">
    <property type="protein sequence ID" value="AAZ21465.1"/>
    <property type="molecule type" value="Genomic_DNA"/>
</dbReference>
<dbReference type="RefSeq" id="WP_011281835.1">
    <property type="nucleotide sequence ID" value="NC_007205.1"/>
</dbReference>
<dbReference type="STRING" id="335992.SAR11_0645"/>
<dbReference type="GeneID" id="66295149"/>
<dbReference type="KEGG" id="pub:SAR11_0645"/>
<dbReference type="eggNOG" id="COG0688">
    <property type="taxonomic scope" value="Bacteria"/>
</dbReference>
<dbReference type="HOGENOM" id="CLU_072492_0_0_5"/>
<dbReference type="OrthoDB" id="9790893at2"/>
<dbReference type="UniPathway" id="UPA00558">
    <property type="reaction ID" value="UER00616"/>
</dbReference>
<dbReference type="Proteomes" id="UP000002528">
    <property type="component" value="Chromosome"/>
</dbReference>
<dbReference type="GO" id="GO:0005886">
    <property type="term" value="C:plasma membrane"/>
    <property type="evidence" value="ECO:0007669"/>
    <property type="project" value="UniProtKB-SubCell"/>
</dbReference>
<dbReference type="GO" id="GO:0004609">
    <property type="term" value="F:phosphatidylserine decarboxylase activity"/>
    <property type="evidence" value="ECO:0007669"/>
    <property type="project" value="UniProtKB-UniRule"/>
</dbReference>
<dbReference type="GO" id="GO:0006646">
    <property type="term" value="P:phosphatidylethanolamine biosynthetic process"/>
    <property type="evidence" value="ECO:0007669"/>
    <property type="project" value="UniProtKB-UniRule"/>
</dbReference>
<dbReference type="HAMAP" id="MF_00664">
    <property type="entry name" value="PS_decarb_PSD_A"/>
    <property type="match status" value="1"/>
</dbReference>
<dbReference type="InterPro" id="IPR003817">
    <property type="entry name" value="PS_Dcarbxylase"/>
</dbReference>
<dbReference type="InterPro" id="IPR033175">
    <property type="entry name" value="PSD-A"/>
</dbReference>
<dbReference type="NCBIfam" id="NF003678">
    <property type="entry name" value="PRK05305.1-2"/>
    <property type="match status" value="1"/>
</dbReference>
<dbReference type="NCBIfam" id="NF003679">
    <property type="entry name" value="PRK05305.1-3"/>
    <property type="match status" value="1"/>
</dbReference>
<dbReference type="NCBIfam" id="NF003685">
    <property type="entry name" value="PRK05305.2-5"/>
    <property type="match status" value="1"/>
</dbReference>
<dbReference type="PANTHER" id="PTHR35809">
    <property type="entry name" value="ARCHAETIDYLSERINE DECARBOXYLASE PROENZYME-RELATED"/>
    <property type="match status" value="1"/>
</dbReference>
<dbReference type="PANTHER" id="PTHR35809:SF1">
    <property type="entry name" value="ARCHAETIDYLSERINE DECARBOXYLASE PROENZYME-RELATED"/>
    <property type="match status" value="1"/>
</dbReference>
<dbReference type="Pfam" id="PF02666">
    <property type="entry name" value="PS_Dcarbxylase"/>
    <property type="match status" value="1"/>
</dbReference>
<organism>
    <name type="scientific">Pelagibacter ubique (strain HTCC1062)</name>
    <dbReference type="NCBI Taxonomy" id="335992"/>
    <lineage>
        <taxon>Bacteria</taxon>
        <taxon>Pseudomonadati</taxon>
        <taxon>Pseudomonadota</taxon>
        <taxon>Alphaproteobacteria</taxon>
        <taxon>Candidatus Pelagibacterales</taxon>
        <taxon>Candidatus Pelagibacteraceae</taxon>
        <taxon>Candidatus Pelagibacter</taxon>
    </lineage>
</organism>
<comment type="function">
    <text evidence="1">Catalyzes the formation of phosphatidylethanolamine (PtdEtn) from phosphatidylserine (PtdSer).</text>
</comment>
<comment type="catalytic activity">
    <reaction evidence="1">
        <text>a 1,2-diacyl-sn-glycero-3-phospho-L-serine + H(+) = a 1,2-diacyl-sn-glycero-3-phosphoethanolamine + CO2</text>
        <dbReference type="Rhea" id="RHEA:20828"/>
        <dbReference type="ChEBI" id="CHEBI:15378"/>
        <dbReference type="ChEBI" id="CHEBI:16526"/>
        <dbReference type="ChEBI" id="CHEBI:57262"/>
        <dbReference type="ChEBI" id="CHEBI:64612"/>
        <dbReference type="EC" id="4.1.1.65"/>
    </reaction>
</comment>
<comment type="cofactor">
    <cofactor evidence="1">
        <name>pyruvate</name>
        <dbReference type="ChEBI" id="CHEBI:15361"/>
    </cofactor>
    <text evidence="1">Binds 1 pyruvoyl group covalently per subunit.</text>
</comment>
<comment type="pathway">
    <text evidence="1">Phospholipid metabolism; phosphatidylethanolamine biosynthesis; phosphatidylethanolamine from CDP-diacylglycerol: step 2/2.</text>
</comment>
<comment type="subunit">
    <text evidence="1">Heterodimer of a large membrane-associated beta subunit and a small pyruvoyl-containing alpha subunit.</text>
</comment>
<comment type="subcellular location">
    <subcellularLocation>
        <location evidence="1">Cell membrane</location>
        <topology evidence="1">Peripheral membrane protein</topology>
    </subcellularLocation>
</comment>
<comment type="PTM">
    <text evidence="1">Is synthesized initially as an inactive proenzyme. Formation of the active enzyme involves a self-maturation process in which the active site pyruvoyl group is generated from an internal serine residue via an autocatalytic post-translational modification. Two non-identical subunits are generated from the proenzyme in this reaction, and the pyruvate is formed at the N-terminus of the alpha chain, which is derived from the carboxyl end of the proenzyme. The post-translation cleavage follows an unusual pathway, termed non-hydrolytic serinolysis, in which the side chain hydroxyl group of the serine supplies its oxygen atom to form the C-terminus of the beta chain, while the remainder of the serine residue undergoes an oxidative deamination to produce ammonia and the pyruvoyl prosthetic group on the alpha chain.</text>
</comment>
<comment type="similarity">
    <text evidence="1">Belongs to the phosphatidylserine decarboxylase family. PSD-A subfamily.</text>
</comment>
<protein>
    <recommendedName>
        <fullName evidence="1">Phosphatidylserine decarboxylase proenzyme</fullName>
        <ecNumber evidence="1">4.1.1.65</ecNumber>
    </recommendedName>
    <component>
        <recommendedName>
            <fullName evidence="1">Phosphatidylserine decarboxylase alpha chain</fullName>
        </recommendedName>
    </component>
    <component>
        <recommendedName>
            <fullName evidence="1">Phosphatidylserine decarboxylase beta chain</fullName>
        </recommendedName>
    </component>
</protein>